<gene>
    <name evidence="11 16" type="primary">egl-21</name>
    <name evidence="16" type="ORF">F01D4.4</name>
</gene>
<proteinExistence type="evidence at protein level"/>
<keyword id="KW-0121">Carboxypeptidase</keyword>
<keyword id="KW-0966">Cell projection</keyword>
<keyword id="KW-0968">Cytoplasmic vesicle</keyword>
<keyword id="KW-0325">Glycoprotein</keyword>
<keyword id="KW-0378">Hydrolase</keyword>
<keyword id="KW-0479">Metal-binding</keyword>
<keyword id="KW-0482">Metalloprotease</keyword>
<keyword id="KW-0645">Protease</keyword>
<keyword id="KW-1185">Reference proteome</keyword>
<keyword id="KW-0732">Signal</keyword>
<keyword id="KW-0862">Zinc</keyword>
<reference evidence="15" key="1">
    <citation type="journal article" date="1998" name="Science">
        <title>Genome sequence of the nematode C. elegans: a platform for investigating biology.</title>
        <authorList>
            <consortium name="The C. elegans sequencing consortium"/>
        </authorList>
    </citation>
    <scope>NUCLEOTIDE SEQUENCE [LARGE SCALE GENOMIC DNA]</scope>
    <source>
        <strain evidence="15">Bristol N2</strain>
    </source>
</reference>
<reference evidence="14" key="2">
    <citation type="journal article" date="1983" name="Genetics">
        <title>Egg-laying defective mutants of the nematode Caenorhabditis elegans.</title>
        <authorList>
            <person name="Trent C."/>
            <person name="Tsuing N."/>
            <person name="Horvitz H.R."/>
        </authorList>
    </citation>
    <scope>FUNCTION</scope>
</reference>
<reference evidence="14" key="3">
    <citation type="journal article" date="2003" name="J. Neurosci.">
        <title>The EGL-21 carboxypeptidase E facilitates acetylcholine release at Caenorhabditis elegans neuromuscular junctions.</title>
        <authorList>
            <person name="Jacob T.C."/>
            <person name="Kaplan J.M."/>
        </authorList>
    </citation>
    <scope>FUNCTION</scope>
    <scope>CATALYTIC ACTIVITY</scope>
    <scope>SUBCELLULAR LOCATION</scope>
    <scope>TISSUE SPECIFICITY</scope>
</reference>
<reference evidence="14" key="4">
    <citation type="journal article" date="2007" name="J. Neurochem.">
        <title>Impaired processing of FLP and NLP peptides in carboxypeptidase E (EGL-21)-deficient Caenorhabditis elegans as analyzed by mass spectrometry.</title>
        <authorList>
            <person name="Husson S.J."/>
            <person name="Janssen T."/>
            <person name="Baggerman G."/>
            <person name="Bogert B."/>
            <person name="Kahn-Kirby A.H."/>
            <person name="Ashrafi K."/>
            <person name="Schoofs L."/>
        </authorList>
    </citation>
    <scope>FUNCTION</scope>
    <scope>CATALYTIC ACTIVITY</scope>
</reference>
<reference evidence="14" key="5">
    <citation type="journal article" date="2007" name="J. Neurosci.">
        <title>FMRFamide-like neuropeptides and mechanosensory touch receptor neurons regulate male sexual turning behavior in Caenorhabditis elegans.</title>
        <authorList>
            <person name="Liu T."/>
            <person name="Kim K."/>
            <person name="Li C."/>
            <person name="Barr M.M."/>
        </authorList>
    </citation>
    <scope>FUNCTION</scope>
</reference>
<reference evidence="14" key="6">
    <citation type="journal article" date="2012" name="PLoS Genet.">
        <title>RIC-7 promotes neuropeptide secretion.</title>
        <authorList>
            <person name="Hao Y."/>
            <person name="Hu Z."/>
            <person name="Sieburth D."/>
            <person name="Kaplan J.M."/>
        </authorList>
    </citation>
    <scope>FUNCTION</scope>
</reference>
<reference evidence="14" key="7">
    <citation type="journal article" date="2014" name="PLoS Genet.">
        <title>The response to high CO2 levels requires the neuropeptide secretion component HID-1 to promote pumping inhibition.</title>
        <authorList>
            <person name="Sharabi K."/>
            <person name="Charar C."/>
            <person name="Friedman N."/>
            <person name="Mizrahi I."/>
            <person name="Zaslaver A."/>
            <person name="Sznajder J.I."/>
            <person name="Gruenbaum Y."/>
        </authorList>
    </citation>
    <scope>FUNCTION</scope>
</reference>
<comment type="function">
    <text evidence="5 6 7 8 9 10">During FMRFamide-like peptide (FaRPs or FLP) and neuropeptide-like protein (NLP) precursor processing, catalyzes the removal of Arg or Lys residues from the C-terminus following the initial endoprotease cleavage (PubMed:12657671, PubMed:17564681). By processing neuropeptides, modulates basal acetylcholine release at the ventral cord neuromuscular junctions (PubMed:12657671, PubMed:22275875). Involved in egg-laying, defecation and locomotion (PubMed:11813735, PubMed:17564681, PubMed:22275875). By processing FLP neuropeptides, regulates the turning step of male mating behavior (PubMed:17611271). Involved in reducing pharyngeal pumping in response to high CO(2) levels (PubMed:25101962).</text>
</comment>
<comment type="catalytic activity">
    <reaction evidence="12 13">
        <text>Release of C-terminal arginine or lysine residues from polypeptides.</text>
        <dbReference type="EC" id="3.4.17.10"/>
    </reaction>
</comment>
<comment type="cofactor">
    <cofactor evidence="1">
        <name>Zn(2+)</name>
        <dbReference type="ChEBI" id="CHEBI:29105"/>
    </cofactor>
    <text evidence="1">Binds 1 zinc ion per subunit.</text>
</comment>
<comment type="subcellular location">
    <subcellularLocation>
        <location evidence="6">Cell projection</location>
        <location evidence="6">Axon</location>
    </subcellularLocation>
    <subcellularLocation>
        <location evidence="6">Perikaryon</location>
    </subcellularLocation>
    <subcellularLocation>
        <location evidence="12">Cytoplasmic vesicle</location>
        <location evidence="12">Secretory vesicle lumen</location>
    </subcellularLocation>
    <text evidence="6">Predominantly localizes to axons in the nerve ring.</text>
</comment>
<comment type="tissue specificity">
    <text evidence="6">Expression is restricted to the nervous system.</text>
</comment>
<comment type="similarity">
    <text evidence="14">Belongs to the peptidase M14 family.</text>
</comment>
<dbReference type="EC" id="3.4.17.10" evidence="12 13"/>
<dbReference type="EMBL" id="BX284604">
    <property type="protein sequence ID" value="CAB02881.1"/>
    <property type="molecule type" value="Genomic_DNA"/>
</dbReference>
<dbReference type="PIR" id="T20454">
    <property type="entry name" value="T20454"/>
</dbReference>
<dbReference type="RefSeq" id="NP_501935.1">
    <property type="nucleotide sequence ID" value="NM_069534.7"/>
</dbReference>
<dbReference type="SMR" id="O17754"/>
<dbReference type="DIP" id="DIP-26452N"/>
<dbReference type="FunCoup" id="O17754">
    <property type="interactions" value="360"/>
</dbReference>
<dbReference type="IntAct" id="O17754">
    <property type="interactions" value="1"/>
</dbReference>
<dbReference type="STRING" id="6239.F01D4.4.1"/>
<dbReference type="MEROPS" id="M14.033"/>
<dbReference type="GlyCosmos" id="O17754">
    <property type="glycosylation" value="3 sites, No reported glycans"/>
</dbReference>
<dbReference type="PaxDb" id="6239-F01D4.4.1"/>
<dbReference type="PeptideAtlas" id="O17754"/>
<dbReference type="EnsemblMetazoa" id="F01D4.4.1">
    <property type="protein sequence ID" value="F01D4.4.1"/>
    <property type="gene ID" value="WBGene00001189"/>
</dbReference>
<dbReference type="GeneID" id="177940"/>
<dbReference type="KEGG" id="cel:CELE_F01D4.4"/>
<dbReference type="UCSC" id="F01D4.4.1">
    <property type="organism name" value="c. elegans"/>
</dbReference>
<dbReference type="AGR" id="WB:WBGene00001189"/>
<dbReference type="CTD" id="177940"/>
<dbReference type="WormBase" id="F01D4.4">
    <property type="protein sequence ID" value="CE09156"/>
    <property type="gene ID" value="WBGene00001189"/>
    <property type="gene designation" value="egl-21"/>
</dbReference>
<dbReference type="eggNOG" id="KOG2649">
    <property type="taxonomic scope" value="Eukaryota"/>
</dbReference>
<dbReference type="HOGENOM" id="CLU_006722_1_3_1"/>
<dbReference type="InParanoid" id="O17754"/>
<dbReference type="OMA" id="CDYHEAK"/>
<dbReference type="OrthoDB" id="10249045at2759"/>
<dbReference type="PhylomeDB" id="O17754"/>
<dbReference type="PRO" id="PR:O17754"/>
<dbReference type="Proteomes" id="UP000001940">
    <property type="component" value="Chromosome IV"/>
</dbReference>
<dbReference type="Bgee" id="WBGene00001189">
    <property type="expression patterns" value="Expressed in larva and 3 other cell types or tissues"/>
</dbReference>
<dbReference type="GO" id="GO:0030424">
    <property type="term" value="C:axon"/>
    <property type="evidence" value="ECO:0000314"/>
    <property type="project" value="WormBase"/>
</dbReference>
<dbReference type="GO" id="GO:0031410">
    <property type="term" value="C:cytoplasmic vesicle"/>
    <property type="evidence" value="ECO:0000314"/>
    <property type="project" value="WormBase"/>
</dbReference>
<dbReference type="GO" id="GO:0005615">
    <property type="term" value="C:extracellular space"/>
    <property type="evidence" value="ECO:0000318"/>
    <property type="project" value="GO_Central"/>
</dbReference>
<dbReference type="GO" id="GO:0043025">
    <property type="term" value="C:neuronal cell body"/>
    <property type="evidence" value="ECO:0000314"/>
    <property type="project" value="WormBase"/>
</dbReference>
<dbReference type="GO" id="GO:0043204">
    <property type="term" value="C:perikaryon"/>
    <property type="evidence" value="ECO:0007669"/>
    <property type="project" value="UniProtKB-SubCell"/>
</dbReference>
<dbReference type="GO" id="GO:0098793">
    <property type="term" value="C:presynapse"/>
    <property type="evidence" value="ECO:0007669"/>
    <property type="project" value="GOC"/>
</dbReference>
<dbReference type="GO" id="GO:0004180">
    <property type="term" value="F:carboxypeptidase activity"/>
    <property type="evidence" value="ECO:0000315"/>
    <property type="project" value="WormBase"/>
</dbReference>
<dbReference type="GO" id="GO:0004181">
    <property type="term" value="F:metallocarboxypeptidase activity"/>
    <property type="evidence" value="ECO:0000318"/>
    <property type="project" value="GO_Central"/>
</dbReference>
<dbReference type="GO" id="GO:0008270">
    <property type="term" value="F:zinc ion binding"/>
    <property type="evidence" value="ECO:0007669"/>
    <property type="project" value="InterPro"/>
</dbReference>
<dbReference type="GO" id="GO:0014055">
    <property type="term" value="P:acetylcholine secretion, neurotransmission"/>
    <property type="evidence" value="ECO:0000315"/>
    <property type="project" value="WormBase"/>
</dbReference>
<dbReference type="GO" id="GO:0071244">
    <property type="term" value="P:cellular response to carbon dioxide"/>
    <property type="evidence" value="ECO:0000315"/>
    <property type="project" value="UniProtKB"/>
</dbReference>
<dbReference type="GO" id="GO:0030536">
    <property type="term" value="P:larval feeding behavior"/>
    <property type="evidence" value="ECO:0000315"/>
    <property type="project" value="UniProtKB"/>
</dbReference>
<dbReference type="GO" id="GO:1903745">
    <property type="term" value="P:negative regulation of nematode pharyngeal pumping"/>
    <property type="evidence" value="ECO:0000315"/>
    <property type="project" value="UniProtKB"/>
</dbReference>
<dbReference type="GO" id="GO:0061837">
    <property type="term" value="P:neuropeptide processing"/>
    <property type="evidence" value="ECO:0000315"/>
    <property type="project" value="UniProtKB"/>
</dbReference>
<dbReference type="GO" id="GO:0006518">
    <property type="term" value="P:peptide metabolic process"/>
    <property type="evidence" value="ECO:0000318"/>
    <property type="project" value="GO_Central"/>
</dbReference>
<dbReference type="GO" id="GO:0014057">
    <property type="term" value="P:positive regulation of acetylcholine secretion, neurotransmission"/>
    <property type="evidence" value="ECO:0000315"/>
    <property type="project" value="UniProtKB"/>
</dbReference>
<dbReference type="GO" id="GO:2000294">
    <property type="term" value="P:positive regulation of defecation"/>
    <property type="evidence" value="ECO:0000315"/>
    <property type="project" value="UniProtKB"/>
</dbReference>
<dbReference type="GO" id="GO:0060456">
    <property type="term" value="P:positive regulation of digestive system process"/>
    <property type="evidence" value="ECO:0000315"/>
    <property type="project" value="UniProtKB"/>
</dbReference>
<dbReference type="GO" id="GO:0090326">
    <property type="term" value="P:positive regulation of locomotion involved in locomotory behavior"/>
    <property type="evidence" value="ECO:0000315"/>
    <property type="project" value="UniProtKB"/>
</dbReference>
<dbReference type="GO" id="GO:0045887">
    <property type="term" value="P:positive regulation of synaptic assembly at neuromuscular junction"/>
    <property type="evidence" value="ECO:0000316"/>
    <property type="project" value="UniProtKB"/>
</dbReference>
<dbReference type="GO" id="GO:0016485">
    <property type="term" value="P:protein processing"/>
    <property type="evidence" value="ECO:0000315"/>
    <property type="project" value="WormBase"/>
</dbReference>
<dbReference type="GO" id="GO:1903998">
    <property type="term" value="P:regulation of eating behavior"/>
    <property type="evidence" value="ECO:0000315"/>
    <property type="project" value="UniProtKB"/>
</dbReference>
<dbReference type="GO" id="GO:0006937">
    <property type="term" value="P:regulation of muscle contraction"/>
    <property type="evidence" value="ECO:0000315"/>
    <property type="project" value="UniProtKB"/>
</dbReference>
<dbReference type="CDD" id="cd03858">
    <property type="entry name" value="M14_CP_N-E_like"/>
    <property type="match status" value="1"/>
</dbReference>
<dbReference type="CDD" id="cd11308">
    <property type="entry name" value="Peptidase_M14NE-CP-C_like"/>
    <property type="match status" value="1"/>
</dbReference>
<dbReference type="FunFam" id="2.60.40.1120:FF:000019">
    <property type="entry name" value="Carboxypeptidase D"/>
    <property type="match status" value="1"/>
</dbReference>
<dbReference type="FunFam" id="3.40.630.10:FF:000020">
    <property type="entry name" value="Carboxypeptidase D"/>
    <property type="match status" value="1"/>
</dbReference>
<dbReference type="Gene3D" id="2.60.40.1120">
    <property type="entry name" value="Carboxypeptidase-like, regulatory domain"/>
    <property type="match status" value="1"/>
</dbReference>
<dbReference type="Gene3D" id="3.40.630.10">
    <property type="entry name" value="Zn peptidases"/>
    <property type="match status" value="1"/>
</dbReference>
<dbReference type="InterPro" id="IPR008969">
    <property type="entry name" value="CarboxyPept-like_regulatory"/>
</dbReference>
<dbReference type="InterPro" id="IPR000834">
    <property type="entry name" value="Peptidase_M14"/>
</dbReference>
<dbReference type="InterPro" id="IPR050753">
    <property type="entry name" value="Peptidase_M14_domain"/>
</dbReference>
<dbReference type="PANTHER" id="PTHR11532:SF93">
    <property type="entry name" value="CARBOXYPEPTIDASE E"/>
    <property type="match status" value="1"/>
</dbReference>
<dbReference type="PANTHER" id="PTHR11532">
    <property type="entry name" value="PROTEASE M14 CARBOXYPEPTIDASE"/>
    <property type="match status" value="1"/>
</dbReference>
<dbReference type="Pfam" id="PF13620">
    <property type="entry name" value="CarboxypepD_reg"/>
    <property type="match status" value="1"/>
</dbReference>
<dbReference type="Pfam" id="PF00246">
    <property type="entry name" value="Peptidase_M14"/>
    <property type="match status" value="1"/>
</dbReference>
<dbReference type="PRINTS" id="PR00765">
    <property type="entry name" value="CRBOXYPTASEA"/>
</dbReference>
<dbReference type="SMART" id="SM00631">
    <property type="entry name" value="Zn_pept"/>
    <property type="match status" value="1"/>
</dbReference>
<dbReference type="SUPFAM" id="SSF49464">
    <property type="entry name" value="Carboxypeptidase regulatory domain-like"/>
    <property type="match status" value="1"/>
</dbReference>
<dbReference type="SUPFAM" id="SSF53187">
    <property type="entry name" value="Zn-dependent exopeptidases"/>
    <property type="match status" value="1"/>
</dbReference>
<dbReference type="PROSITE" id="PS00132">
    <property type="entry name" value="CARBOXYPEPT_ZN_1"/>
    <property type="match status" value="1"/>
</dbReference>
<dbReference type="PROSITE" id="PS52035">
    <property type="entry name" value="PEPTIDASE_M14"/>
    <property type="match status" value="1"/>
</dbReference>
<organism evidence="15">
    <name type="scientific">Caenorhabditis elegans</name>
    <dbReference type="NCBI Taxonomy" id="6239"/>
    <lineage>
        <taxon>Eukaryota</taxon>
        <taxon>Metazoa</taxon>
        <taxon>Ecdysozoa</taxon>
        <taxon>Nematoda</taxon>
        <taxon>Chromadorea</taxon>
        <taxon>Rhabditida</taxon>
        <taxon>Rhabditina</taxon>
        <taxon>Rhabditomorpha</taxon>
        <taxon>Rhabditoidea</taxon>
        <taxon>Rhabditidae</taxon>
        <taxon>Peloderinae</taxon>
        <taxon>Caenorhabditis</taxon>
    </lineage>
</organism>
<sequence>MLHAMRPVLLVAALLAVTAHAFLGFGSGSTHKDDAEWGHYHNQAQLEAKLGEINEKCPEITTLYEIGQSVEGRPLVVIQFSTTPGEHIPTKPEVKLIGNMHGNEPIGRELLLRFAETLCNGAINNDKEIVQLLNSTSIHILPSMNPDGFELALGTEPAQRQWLTGRSNINGVDLNRDFPDLDSIFYELQKIGVPKFDHLLSLFEDNVDRQPETIAVGQWTLSLPFVLSANFHEGDLVANYPFDAAIDENSQKTAYSASPDDGTFRWLAKSYADNHAHMSKNDHAPCDGTSQDAFARQGGITNGAKWYSVAGGMQDFNYLATNAMEITLELSCEKMPEGSQLPRFWEDNQKSIFEYVWKSHSGVKGMVVDAMTGEPIKRAVVWIRNGTETVPVKHPVTTWSEGDFYRVLPAGKYEIIVAAEGYDIAAKNVTVENKVRDSALVVNFALSPAADEPSENEQEQIAELVNEIARRR</sequence>
<evidence type="ECO:0000250" key="1">
    <source>
        <dbReference type="UniProtKB" id="P00730"/>
    </source>
</evidence>
<evidence type="ECO:0000255" key="2"/>
<evidence type="ECO:0000255" key="3">
    <source>
        <dbReference type="PROSITE-ProRule" id="PRU00498"/>
    </source>
</evidence>
<evidence type="ECO:0000255" key="4">
    <source>
        <dbReference type="PROSITE-ProRule" id="PRU01379"/>
    </source>
</evidence>
<evidence type="ECO:0000269" key="5">
    <source>
    </source>
</evidence>
<evidence type="ECO:0000269" key="6">
    <source>
    </source>
</evidence>
<evidence type="ECO:0000269" key="7">
    <source>
    </source>
</evidence>
<evidence type="ECO:0000269" key="8">
    <source>
    </source>
</evidence>
<evidence type="ECO:0000269" key="9">
    <source>
    </source>
</evidence>
<evidence type="ECO:0000269" key="10">
    <source>
    </source>
</evidence>
<evidence type="ECO:0000303" key="11">
    <source>
    </source>
</evidence>
<evidence type="ECO:0000303" key="12">
    <source>
    </source>
</evidence>
<evidence type="ECO:0000303" key="13">
    <source>
    </source>
</evidence>
<evidence type="ECO:0000305" key="14"/>
<evidence type="ECO:0000312" key="15">
    <source>
        <dbReference type="Proteomes" id="UP000001940"/>
    </source>
</evidence>
<evidence type="ECO:0000312" key="16">
    <source>
        <dbReference type="WormBase" id="F01D4.4"/>
    </source>
</evidence>
<protein>
    <recommendedName>
        <fullName evidence="12">Carboxypeptidase E</fullName>
        <shortName evidence="12">CPE</shortName>
        <ecNumber evidence="12 13">3.4.17.10</ecNumber>
    </recommendedName>
    <alternativeName>
        <fullName evidence="11">Egg-laying defective protein 21</fullName>
    </alternativeName>
</protein>
<accession>O17754</accession>
<feature type="signal peptide" evidence="2">
    <location>
        <begin position="1"/>
        <end position="21"/>
    </location>
</feature>
<feature type="chain" id="PRO_5004157411" description="Carboxypeptidase E" evidence="2">
    <location>
        <begin position="22"/>
        <end position="472"/>
    </location>
</feature>
<feature type="domain" description="Peptidase M14" evidence="4">
    <location>
        <begin position="39"/>
        <end position="359"/>
    </location>
</feature>
<feature type="active site" description="Proton donor/acceptor" evidence="4">
    <location>
        <position position="329"/>
    </location>
</feature>
<feature type="binding site" evidence="4">
    <location>
        <position position="101"/>
    </location>
    <ligand>
        <name>Zn(2+)</name>
        <dbReference type="ChEBI" id="CHEBI:29105"/>
        <note>catalytic</note>
    </ligand>
</feature>
<feature type="binding site" evidence="4">
    <location>
        <position position="104"/>
    </location>
    <ligand>
        <name>Zn(2+)</name>
        <dbReference type="ChEBI" id="CHEBI:29105"/>
        <note>catalytic</note>
    </ligand>
</feature>
<feature type="binding site" evidence="4">
    <location>
        <position position="232"/>
    </location>
    <ligand>
        <name>Zn(2+)</name>
        <dbReference type="ChEBI" id="CHEBI:29105"/>
        <note>catalytic</note>
    </ligand>
</feature>
<feature type="glycosylation site" description="N-linked (GlcNAc...) asparagine" evidence="3">
    <location>
        <position position="134"/>
    </location>
</feature>
<feature type="glycosylation site" description="N-linked (GlcNAc...) asparagine" evidence="3">
    <location>
        <position position="385"/>
    </location>
</feature>
<feature type="glycosylation site" description="N-linked (GlcNAc...) asparagine" evidence="3">
    <location>
        <position position="428"/>
    </location>
</feature>
<name>CBPE_CAEEL</name>